<feature type="chain" id="PRO_1000092565" description="Transcription antitermination protein NusB">
    <location>
        <begin position="1"/>
        <end position="140"/>
    </location>
</feature>
<dbReference type="EMBL" id="CP000786">
    <property type="protein sequence ID" value="ABZ98241.1"/>
    <property type="molecule type" value="Genomic_DNA"/>
</dbReference>
<dbReference type="SMR" id="B0ST01"/>
<dbReference type="STRING" id="456481.LEPBI_I2139"/>
<dbReference type="KEGG" id="lbi:LEPBI_I2139"/>
<dbReference type="HOGENOM" id="CLU_087843_3_3_12"/>
<dbReference type="OrthoDB" id="9811381at2"/>
<dbReference type="BioCyc" id="LBIF456481:LEPBI_RS10565-MONOMER"/>
<dbReference type="Proteomes" id="UP000001847">
    <property type="component" value="Chromosome I"/>
</dbReference>
<dbReference type="GO" id="GO:0005829">
    <property type="term" value="C:cytosol"/>
    <property type="evidence" value="ECO:0007669"/>
    <property type="project" value="TreeGrafter"/>
</dbReference>
<dbReference type="GO" id="GO:0003723">
    <property type="term" value="F:RNA binding"/>
    <property type="evidence" value="ECO:0007669"/>
    <property type="project" value="UniProtKB-UniRule"/>
</dbReference>
<dbReference type="GO" id="GO:0006353">
    <property type="term" value="P:DNA-templated transcription termination"/>
    <property type="evidence" value="ECO:0007669"/>
    <property type="project" value="UniProtKB-UniRule"/>
</dbReference>
<dbReference type="GO" id="GO:0031564">
    <property type="term" value="P:transcription antitermination"/>
    <property type="evidence" value="ECO:0007669"/>
    <property type="project" value="UniProtKB-KW"/>
</dbReference>
<dbReference type="Gene3D" id="1.10.940.10">
    <property type="entry name" value="NusB-like"/>
    <property type="match status" value="1"/>
</dbReference>
<dbReference type="HAMAP" id="MF_00073">
    <property type="entry name" value="NusB"/>
    <property type="match status" value="1"/>
</dbReference>
<dbReference type="InterPro" id="IPR035926">
    <property type="entry name" value="NusB-like_sf"/>
</dbReference>
<dbReference type="InterPro" id="IPR011605">
    <property type="entry name" value="NusB_fam"/>
</dbReference>
<dbReference type="InterPro" id="IPR006027">
    <property type="entry name" value="NusB_RsmB_TIM44"/>
</dbReference>
<dbReference type="NCBIfam" id="TIGR01951">
    <property type="entry name" value="nusB"/>
    <property type="match status" value="1"/>
</dbReference>
<dbReference type="PANTHER" id="PTHR11078:SF3">
    <property type="entry name" value="ANTITERMINATION NUSB DOMAIN-CONTAINING PROTEIN"/>
    <property type="match status" value="1"/>
</dbReference>
<dbReference type="PANTHER" id="PTHR11078">
    <property type="entry name" value="N UTILIZATION SUBSTANCE PROTEIN B-RELATED"/>
    <property type="match status" value="1"/>
</dbReference>
<dbReference type="Pfam" id="PF01029">
    <property type="entry name" value="NusB"/>
    <property type="match status" value="1"/>
</dbReference>
<dbReference type="SUPFAM" id="SSF48013">
    <property type="entry name" value="NusB-like"/>
    <property type="match status" value="1"/>
</dbReference>
<sequence>MSSRHRGRSLALMCLYQIDLVGTDPDRAMKFDWYDKKITREEKDYAVFLVKGVVENRKAIDTLIKKYSENWELSRISVVNRCILRLSILSLQKEPFLAAPVVINEAVELTKEFETEESAQFINGLLDAFYKKEILPKEPH</sequence>
<protein>
    <recommendedName>
        <fullName evidence="1">Transcription antitermination protein NusB</fullName>
    </recommendedName>
    <alternativeName>
        <fullName evidence="1">Antitermination factor NusB</fullName>
    </alternativeName>
</protein>
<proteinExistence type="inferred from homology"/>
<name>NUSB_LEPBP</name>
<gene>
    <name evidence="1" type="primary">nusB</name>
    <name type="ordered locus">LEPBI_I2139</name>
</gene>
<reference key="1">
    <citation type="journal article" date="2008" name="PLoS ONE">
        <title>Genome sequence of the saprophyte Leptospira biflexa provides insights into the evolution of Leptospira and the pathogenesis of leptospirosis.</title>
        <authorList>
            <person name="Picardeau M."/>
            <person name="Bulach D.M."/>
            <person name="Bouchier C."/>
            <person name="Zuerner R.L."/>
            <person name="Zidane N."/>
            <person name="Wilson P.J."/>
            <person name="Creno S."/>
            <person name="Kuczek E.S."/>
            <person name="Bommezzadri S."/>
            <person name="Davis J.C."/>
            <person name="McGrath A."/>
            <person name="Johnson M.J."/>
            <person name="Boursaux-Eude C."/>
            <person name="Seemann T."/>
            <person name="Rouy Z."/>
            <person name="Coppel R.L."/>
            <person name="Rood J.I."/>
            <person name="Lajus A."/>
            <person name="Davies J.K."/>
            <person name="Medigue C."/>
            <person name="Adler B."/>
        </authorList>
    </citation>
    <scope>NUCLEOTIDE SEQUENCE [LARGE SCALE GENOMIC DNA]</scope>
    <source>
        <strain>Patoc 1 / ATCC 23582 / Paris</strain>
    </source>
</reference>
<organism>
    <name type="scientific">Leptospira biflexa serovar Patoc (strain Patoc 1 / ATCC 23582 / Paris)</name>
    <dbReference type="NCBI Taxonomy" id="456481"/>
    <lineage>
        <taxon>Bacteria</taxon>
        <taxon>Pseudomonadati</taxon>
        <taxon>Spirochaetota</taxon>
        <taxon>Spirochaetia</taxon>
        <taxon>Leptospirales</taxon>
        <taxon>Leptospiraceae</taxon>
        <taxon>Leptospira</taxon>
    </lineage>
</organism>
<comment type="function">
    <text evidence="1">Involved in transcription antitermination. Required for transcription of ribosomal RNA (rRNA) genes. Binds specifically to the boxA antiterminator sequence of the ribosomal RNA (rrn) operons.</text>
</comment>
<comment type="similarity">
    <text evidence="1">Belongs to the NusB family.</text>
</comment>
<evidence type="ECO:0000255" key="1">
    <source>
        <dbReference type="HAMAP-Rule" id="MF_00073"/>
    </source>
</evidence>
<keyword id="KW-1185">Reference proteome</keyword>
<keyword id="KW-0694">RNA-binding</keyword>
<keyword id="KW-0804">Transcription</keyword>
<keyword id="KW-0889">Transcription antitermination</keyword>
<keyword id="KW-0805">Transcription regulation</keyword>
<accession>B0ST01</accession>